<dbReference type="EMBL" id="AE000782">
    <property type="protein sequence ID" value="AAB89103.1"/>
    <property type="molecule type" value="Genomic_DNA"/>
</dbReference>
<dbReference type="PIR" id="H69518">
    <property type="entry name" value="H69518"/>
</dbReference>
<dbReference type="RefSeq" id="WP_010879641.1">
    <property type="nucleotide sequence ID" value="NC_000917.1"/>
</dbReference>
<dbReference type="SMR" id="O28130"/>
<dbReference type="STRING" id="224325.AF_2152"/>
<dbReference type="PaxDb" id="224325-AF_2152"/>
<dbReference type="EnsemblBacteria" id="AAB89103">
    <property type="protein sequence ID" value="AAB89103"/>
    <property type="gene ID" value="AF_2152"/>
</dbReference>
<dbReference type="KEGG" id="afu:AF_2152"/>
<dbReference type="eggNOG" id="arCOG04154">
    <property type="taxonomic scope" value="Archaea"/>
</dbReference>
<dbReference type="HOGENOM" id="CLU_080597_2_1_2"/>
<dbReference type="OrthoDB" id="372305at2157"/>
<dbReference type="PhylomeDB" id="O28130"/>
<dbReference type="Proteomes" id="UP000002199">
    <property type="component" value="Chromosome"/>
</dbReference>
<dbReference type="GO" id="GO:1990904">
    <property type="term" value="C:ribonucleoprotein complex"/>
    <property type="evidence" value="ECO:0007669"/>
    <property type="project" value="UniProtKB-KW"/>
</dbReference>
<dbReference type="GO" id="GO:0005840">
    <property type="term" value="C:ribosome"/>
    <property type="evidence" value="ECO:0007669"/>
    <property type="project" value="UniProtKB-KW"/>
</dbReference>
<dbReference type="GO" id="GO:0003735">
    <property type="term" value="F:structural constituent of ribosome"/>
    <property type="evidence" value="ECO:0007669"/>
    <property type="project" value="InterPro"/>
</dbReference>
<dbReference type="GO" id="GO:0006412">
    <property type="term" value="P:translation"/>
    <property type="evidence" value="ECO:0007669"/>
    <property type="project" value="UniProtKB-UniRule"/>
</dbReference>
<dbReference type="CDD" id="cd11382">
    <property type="entry name" value="Ribosomal_S8e"/>
    <property type="match status" value="1"/>
</dbReference>
<dbReference type="Gene3D" id="2.40.10.310">
    <property type="match status" value="1"/>
</dbReference>
<dbReference type="HAMAP" id="MF_00029">
    <property type="entry name" value="Ribosomal_eS8"/>
    <property type="match status" value="1"/>
</dbReference>
<dbReference type="InterPro" id="IPR001047">
    <property type="entry name" value="Ribosomal_eS8"/>
</dbReference>
<dbReference type="InterPro" id="IPR018283">
    <property type="entry name" value="Ribosomal_eS8_CS"/>
</dbReference>
<dbReference type="InterPro" id="IPR020919">
    <property type="entry name" value="Ribosomal_protein_eS8_arc"/>
</dbReference>
<dbReference type="InterPro" id="IPR022309">
    <property type="entry name" value="Ribosomal_Se8/biogenesis_NSA2"/>
</dbReference>
<dbReference type="NCBIfam" id="TIGR00307">
    <property type="entry name" value="eS8"/>
    <property type="match status" value="1"/>
</dbReference>
<dbReference type="PANTHER" id="PTHR10394">
    <property type="entry name" value="40S RIBOSOMAL PROTEIN S8"/>
    <property type="match status" value="1"/>
</dbReference>
<dbReference type="Pfam" id="PF01201">
    <property type="entry name" value="Ribosomal_S8e"/>
    <property type="match status" value="1"/>
</dbReference>
<dbReference type="PROSITE" id="PS01193">
    <property type="entry name" value="RIBOSOMAL_S8E"/>
    <property type="match status" value="1"/>
</dbReference>
<feature type="chain" id="PRO_0000122263" description="Small ribosomal subunit protein eS8">
    <location>
        <begin position="1"/>
        <end position="125"/>
    </location>
</feature>
<feature type="region of interest" description="Disordered" evidence="2">
    <location>
        <begin position="1"/>
        <end position="20"/>
    </location>
</feature>
<organism>
    <name type="scientific">Archaeoglobus fulgidus (strain ATCC 49558 / DSM 4304 / JCM 9628 / NBRC 100126 / VC-16)</name>
    <dbReference type="NCBI Taxonomy" id="224325"/>
    <lineage>
        <taxon>Archaea</taxon>
        <taxon>Methanobacteriati</taxon>
        <taxon>Methanobacteriota</taxon>
        <taxon>Archaeoglobi</taxon>
        <taxon>Archaeoglobales</taxon>
        <taxon>Archaeoglobaceae</taxon>
        <taxon>Archaeoglobus</taxon>
    </lineage>
</organism>
<accession>O28130</accession>
<reference key="1">
    <citation type="journal article" date="1997" name="Nature">
        <title>The complete genome sequence of the hyperthermophilic, sulphate-reducing archaeon Archaeoglobus fulgidus.</title>
        <authorList>
            <person name="Klenk H.-P."/>
            <person name="Clayton R.A."/>
            <person name="Tomb J.-F."/>
            <person name="White O."/>
            <person name="Nelson K.E."/>
            <person name="Ketchum K.A."/>
            <person name="Dodson R.J."/>
            <person name="Gwinn M.L."/>
            <person name="Hickey E.K."/>
            <person name="Peterson J.D."/>
            <person name="Richardson D.L."/>
            <person name="Kerlavage A.R."/>
            <person name="Graham D.E."/>
            <person name="Kyrpides N.C."/>
            <person name="Fleischmann R.D."/>
            <person name="Quackenbush J."/>
            <person name="Lee N.H."/>
            <person name="Sutton G.G."/>
            <person name="Gill S.R."/>
            <person name="Kirkness E.F."/>
            <person name="Dougherty B.A."/>
            <person name="McKenney K."/>
            <person name="Adams M.D."/>
            <person name="Loftus B.J."/>
            <person name="Peterson S.N."/>
            <person name="Reich C.I."/>
            <person name="McNeil L.K."/>
            <person name="Badger J.H."/>
            <person name="Glodek A."/>
            <person name="Zhou L."/>
            <person name="Overbeek R."/>
            <person name="Gocayne J.D."/>
            <person name="Weidman J.F."/>
            <person name="McDonald L.A."/>
            <person name="Utterback T.R."/>
            <person name="Cotton M.D."/>
            <person name="Spriggs T."/>
            <person name="Artiach P."/>
            <person name="Kaine B.P."/>
            <person name="Sykes S.M."/>
            <person name="Sadow P.W."/>
            <person name="D'Andrea K.P."/>
            <person name="Bowman C."/>
            <person name="Fujii C."/>
            <person name="Garland S.A."/>
            <person name="Mason T.M."/>
            <person name="Olsen G.J."/>
            <person name="Fraser C.M."/>
            <person name="Smith H.O."/>
            <person name="Woese C.R."/>
            <person name="Venter J.C."/>
        </authorList>
    </citation>
    <scope>NUCLEOTIDE SEQUENCE [LARGE SCALE GENOMIC DNA]</scope>
    <source>
        <strain>ATCC 49558 / DSM 4304 / JCM 9628 / NBRC 100126 / VC-16</strain>
    </source>
</reference>
<comment type="subunit">
    <text evidence="1">Part of the 30S ribosomal subunit.</text>
</comment>
<comment type="similarity">
    <text evidence="3">Belongs to the eukaryotic ribosomal protein eS8 family.</text>
</comment>
<protein>
    <recommendedName>
        <fullName evidence="3">Small ribosomal subunit protein eS8</fullName>
    </recommendedName>
    <alternativeName>
        <fullName>30S ribosomal protein S8e</fullName>
    </alternativeName>
</protein>
<sequence length="125" mass="14305">MIWQGRSRRKPSGGFYRKARKKRKYELGREQVETLIGERKVKKIRVRGGNYKLKLFADKYANVYDPKQGKVVRVEIESVVENPAHVHYARRNVITKGAIIATSIGKARVTNRPSQEGVVNAVLIE</sequence>
<gene>
    <name type="primary">rps8e</name>
    <name type="ordered locus">AF_2152</name>
</gene>
<keyword id="KW-1185">Reference proteome</keyword>
<keyword id="KW-0687">Ribonucleoprotein</keyword>
<keyword id="KW-0689">Ribosomal protein</keyword>
<name>RS8E_ARCFU</name>
<proteinExistence type="inferred from homology"/>
<evidence type="ECO:0000250" key="1"/>
<evidence type="ECO:0000256" key="2">
    <source>
        <dbReference type="SAM" id="MobiDB-lite"/>
    </source>
</evidence>
<evidence type="ECO:0000305" key="3"/>